<name>RL31_SALPB</name>
<gene>
    <name evidence="1" type="primary">rpmE</name>
    <name type="ordered locus">SPAB_05074</name>
</gene>
<comment type="function">
    <text evidence="1">Binds the 23S rRNA.</text>
</comment>
<comment type="cofactor">
    <cofactor evidence="1">
        <name>Zn(2+)</name>
        <dbReference type="ChEBI" id="CHEBI:29105"/>
    </cofactor>
    <text evidence="1">Binds 1 zinc ion per subunit.</text>
</comment>
<comment type="subunit">
    <text evidence="1">Part of the 50S ribosomal subunit.</text>
</comment>
<comment type="similarity">
    <text evidence="1">Belongs to the bacterial ribosomal protein bL31 family. Type A subfamily.</text>
</comment>
<accession>A9MZI7</accession>
<reference key="1">
    <citation type="submission" date="2007-11" db="EMBL/GenBank/DDBJ databases">
        <authorList>
            <consortium name="The Salmonella enterica serovar Paratyphi B Genome Sequencing Project"/>
            <person name="McClelland M."/>
            <person name="Sanderson E.K."/>
            <person name="Porwollik S."/>
            <person name="Spieth J."/>
            <person name="Clifton W.S."/>
            <person name="Fulton R."/>
            <person name="Cordes M."/>
            <person name="Wollam A."/>
            <person name="Shah N."/>
            <person name="Pepin K."/>
            <person name="Bhonagiri V."/>
            <person name="Nash W."/>
            <person name="Johnson M."/>
            <person name="Thiruvilangam P."/>
            <person name="Wilson R."/>
        </authorList>
    </citation>
    <scope>NUCLEOTIDE SEQUENCE [LARGE SCALE GENOMIC DNA]</scope>
    <source>
        <strain>ATCC BAA-1250 / SPB7</strain>
    </source>
</reference>
<proteinExistence type="inferred from homology"/>
<keyword id="KW-0479">Metal-binding</keyword>
<keyword id="KW-0687">Ribonucleoprotein</keyword>
<keyword id="KW-0689">Ribosomal protein</keyword>
<keyword id="KW-0694">RNA-binding</keyword>
<keyword id="KW-0699">rRNA-binding</keyword>
<keyword id="KW-0862">Zinc</keyword>
<evidence type="ECO:0000255" key="1">
    <source>
        <dbReference type="HAMAP-Rule" id="MF_00501"/>
    </source>
</evidence>
<evidence type="ECO:0000305" key="2"/>
<feature type="chain" id="PRO_1000126721" description="Large ribosomal subunit protein bL31">
    <location>
        <begin position="1"/>
        <end position="70"/>
    </location>
</feature>
<feature type="binding site" evidence="1">
    <location>
        <position position="16"/>
    </location>
    <ligand>
        <name>Zn(2+)</name>
        <dbReference type="ChEBI" id="CHEBI:29105"/>
    </ligand>
</feature>
<feature type="binding site" evidence="1">
    <location>
        <position position="18"/>
    </location>
    <ligand>
        <name>Zn(2+)</name>
        <dbReference type="ChEBI" id="CHEBI:29105"/>
    </ligand>
</feature>
<feature type="binding site" evidence="1">
    <location>
        <position position="37"/>
    </location>
    <ligand>
        <name>Zn(2+)</name>
        <dbReference type="ChEBI" id="CHEBI:29105"/>
    </ligand>
</feature>
<feature type="binding site" evidence="1">
    <location>
        <position position="40"/>
    </location>
    <ligand>
        <name>Zn(2+)</name>
        <dbReference type="ChEBI" id="CHEBI:29105"/>
    </ligand>
</feature>
<protein>
    <recommendedName>
        <fullName evidence="1">Large ribosomal subunit protein bL31</fullName>
    </recommendedName>
    <alternativeName>
        <fullName evidence="2">50S ribosomal protein L31</fullName>
    </alternativeName>
</protein>
<sequence>MKKGIHPNYVEITATCSCGNVIKTHSTVGHDLNLDVCGKCHPFFTGKQRVVDTGGRVERFNKRFSIPGSK</sequence>
<dbReference type="EMBL" id="CP000886">
    <property type="protein sequence ID" value="ABX70365.1"/>
    <property type="molecule type" value="Genomic_DNA"/>
</dbReference>
<dbReference type="RefSeq" id="WP_000715284.1">
    <property type="nucleotide sequence ID" value="NC_010102.1"/>
</dbReference>
<dbReference type="SMR" id="A9MZI7"/>
<dbReference type="GeneID" id="66758349"/>
<dbReference type="KEGG" id="spq:SPAB_05074"/>
<dbReference type="PATRIC" id="fig|1016998.12.peg.4763"/>
<dbReference type="HOGENOM" id="CLU_114306_4_3_6"/>
<dbReference type="BioCyc" id="SENT1016998:SPAB_RS20650-MONOMER"/>
<dbReference type="Proteomes" id="UP000008556">
    <property type="component" value="Chromosome"/>
</dbReference>
<dbReference type="GO" id="GO:1990904">
    <property type="term" value="C:ribonucleoprotein complex"/>
    <property type="evidence" value="ECO:0007669"/>
    <property type="project" value="UniProtKB-KW"/>
</dbReference>
<dbReference type="GO" id="GO:0005840">
    <property type="term" value="C:ribosome"/>
    <property type="evidence" value="ECO:0007669"/>
    <property type="project" value="UniProtKB-KW"/>
</dbReference>
<dbReference type="GO" id="GO:0046872">
    <property type="term" value="F:metal ion binding"/>
    <property type="evidence" value="ECO:0007669"/>
    <property type="project" value="UniProtKB-KW"/>
</dbReference>
<dbReference type="GO" id="GO:0019843">
    <property type="term" value="F:rRNA binding"/>
    <property type="evidence" value="ECO:0007669"/>
    <property type="project" value="UniProtKB-KW"/>
</dbReference>
<dbReference type="GO" id="GO:0003735">
    <property type="term" value="F:structural constituent of ribosome"/>
    <property type="evidence" value="ECO:0007669"/>
    <property type="project" value="InterPro"/>
</dbReference>
<dbReference type="GO" id="GO:0006412">
    <property type="term" value="P:translation"/>
    <property type="evidence" value="ECO:0007669"/>
    <property type="project" value="UniProtKB-UniRule"/>
</dbReference>
<dbReference type="FunFam" id="4.10.830.30:FF:000001">
    <property type="entry name" value="50S ribosomal protein L31"/>
    <property type="match status" value="1"/>
</dbReference>
<dbReference type="Gene3D" id="4.10.830.30">
    <property type="entry name" value="Ribosomal protein L31"/>
    <property type="match status" value="1"/>
</dbReference>
<dbReference type="HAMAP" id="MF_00501">
    <property type="entry name" value="Ribosomal_bL31_1"/>
    <property type="match status" value="1"/>
</dbReference>
<dbReference type="InterPro" id="IPR034704">
    <property type="entry name" value="Ribosomal_bL28/bL31-like_sf"/>
</dbReference>
<dbReference type="InterPro" id="IPR002150">
    <property type="entry name" value="Ribosomal_bL31"/>
</dbReference>
<dbReference type="InterPro" id="IPR027491">
    <property type="entry name" value="Ribosomal_bL31_A"/>
</dbReference>
<dbReference type="InterPro" id="IPR042105">
    <property type="entry name" value="Ribosomal_bL31_sf"/>
</dbReference>
<dbReference type="NCBIfam" id="TIGR00105">
    <property type="entry name" value="L31"/>
    <property type="match status" value="1"/>
</dbReference>
<dbReference type="NCBIfam" id="NF000612">
    <property type="entry name" value="PRK00019.1"/>
    <property type="match status" value="1"/>
</dbReference>
<dbReference type="NCBIfam" id="NF001809">
    <property type="entry name" value="PRK00528.1"/>
    <property type="match status" value="1"/>
</dbReference>
<dbReference type="PANTHER" id="PTHR33280">
    <property type="entry name" value="50S RIBOSOMAL PROTEIN L31, CHLOROPLASTIC"/>
    <property type="match status" value="1"/>
</dbReference>
<dbReference type="PANTHER" id="PTHR33280:SF6">
    <property type="entry name" value="LARGE RIBOSOMAL SUBUNIT PROTEIN BL31A"/>
    <property type="match status" value="1"/>
</dbReference>
<dbReference type="Pfam" id="PF01197">
    <property type="entry name" value="Ribosomal_L31"/>
    <property type="match status" value="1"/>
</dbReference>
<dbReference type="PRINTS" id="PR01249">
    <property type="entry name" value="RIBOSOMALL31"/>
</dbReference>
<dbReference type="SUPFAM" id="SSF143800">
    <property type="entry name" value="L28p-like"/>
    <property type="match status" value="1"/>
</dbReference>
<dbReference type="PROSITE" id="PS01143">
    <property type="entry name" value="RIBOSOMAL_L31"/>
    <property type="match status" value="1"/>
</dbReference>
<organism>
    <name type="scientific">Salmonella paratyphi B (strain ATCC BAA-1250 / SPB7)</name>
    <dbReference type="NCBI Taxonomy" id="1016998"/>
    <lineage>
        <taxon>Bacteria</taxon>
        <taxon>Pseudomonadati</taxon>
        <taxon>Pseudomonadota</taxon>
        <taxon>Gammaproteobacteria</taxon>
        <taxon>Enterobacterales</taxon>
        <taxon>Enterobacteriaceae</taxon>
        <taxon>Salmonella</taxon>
    </lineage>
</organism>